<protein>
    <recommendedName>
        <fullName>ER membrane protein complex subunit 10</fullName>
    </recommendedName>
</protein>
<feature type="signal peptide" evidence="1">
    <location>
        <begin position="1"/>
        <end position="34"/>
    </location>
</feature>
<feature type="chain" id="PRO_0000315053" description="ER membrane protein complex subunit 10">
    <location>
        <begin position="35"/>
        <end position="263"/>
    </location>
</feature>
<feature type="topological domain" description="Lumenal" evidence="1">
    <location>
        <begin position="35"/>
        <end position="222"/>
    </location>
</feature>
<feature type="transmembrane region" description="Helical" evidence="2">
    <location>
        <begin position="223"/>
        <end position="243"/>
    </location>
</feature>
<feature type="topological domain" description="Cytoplasmic" evidence="1">
    <location>
        <begin position="244"/>
        <end position="263"/>
    </location>
</feature>
<name>EMC10_XENTR</name>
<organism>
    <name type="scientific">Xenopus tropicalis</name>
    <name type="common">Western clawed frog</name>
    <name type="synonym">Silurana tropicalis</name>
    <dbReference type="NCBI Taxonomy" id="8364"/>
    <lineage>
        <taxon>Eukaryota</taxon>
        <taxon>Metazoa</taxon>
        <taxon>Chordata</taxon>
        <taxon>Craniata</taxon>
        <taxon>Vertebrata</taxon>
        <taxon>Euteleostomi</taxon>
        <taxon>Amphibia</taxon>
        <taxon>Batrachia</taxon>
        <taxon>Anura</taxon>
        <taxon>Pipoidea</taxon>
        <taxon>Pipidae</taxon>
        <taxon>Xenopodinae</taxon>
        <taxon>Xenopus</taxon>
        <taxon>Silurana</taxon>
    </lineage>
</organism>
<comment type="function">
    <text evidence="1">Part of the endoplasmic reticulum membrane protein complex (EMC) that enables the energy-independent insertion into endoplasmic reticulum membranes of newly synthesized membrane proteins. Preferentially accommodates proteins with transmembrane domains that are weakly hydrophobic or contain destabilizing features such as charged and aromatic residues. Involved in the cotranslational insertion of multi-pass membrane proteins in which stop-transfer membrane-anchor sequences become ER membrane spanning helices. It is also required for the post-translational insertion of tail-anchored/TA proteins in endoplasmic reticulum membranes. By mediating the proper cotranslational insertion of N-terminal transmembrane domains in an N-exo topology, with translocated N-terminus in the lumen of the ER, controls the topology of multi-pass membrane proteins like the G protein-coupled receptors. By regulating the insertion of various proteins in membranes, it is indirectly involved in many cellular processes. Promotes angiogenesis and tissue repair in the heart after myocardial infarction. Stimulates cardiac endothelial cell migration and outgrowth via the activation of p38 MAPK, PAK and MAPK2 signaling pathways.</text>
</comment>
<comment type="subunit">
    <text evidence="1">Component of the ER membrane protein complex (EMC).</text>
</comment>
<comment type="subcellular location">
    <subcellularLocation>
        <location evidence="1">Endoplasmic reticulum membrane</location>
        <topology evidence="1">Single-pass type I membrane protein</topology>
    </subcellularLocation>
</comment>
<comment type="similarity">
    <text evidence="3">Belongs to the EMC10 family.</text>
</comment>
<reference key="1">
    <citation type="submission" date="2006-10" db="EMBL/GenBank/DDBJ databases">
        <authorList>
            <consortium name="Sanger Xenopus tropicalis EST/cDNA project"/>
        </authorList>
    </citation>
    <scope>NUCLEOTIDE SEQUENCE [LARGE SCALE MRNA]</scope>
    <source>
        <tissue>Neurula</tissue>
    </source>
</reference>
<reference key="2">
    <citation type="submission" date="2003-11" db="EMBL/GenBank/DDBJ databases">
        <authorList>
            <consortium name="NIH - Xenopus Gene Collection (XGC) project"/>
        </authorList>
    </citation>
    <scope>NUCLEOTIDE SEQUENCE [LARGE SCALE MRNA]</scope>
    <source>
        <tissue>Embryo</tissue>
    </source>
</reference>
<evidence type="ECO:0000250" key="1">
    <source>
        <dbReference type="UniProtKB" id="Q5UCC4"/>
    </source>
</evidence>
<evidence type="ECO:0000255" key="2"/>
<evidence type="ECO:0000305" key="3"/>
<dbReference type="EMBL" id="CR760224">
    <property type="protein sequence ID" value="CAJ83041.1"/>
    <property type="molecule type" value="mRNA"/>
</dbReference>
<dbReference type="EMBL" id="CR760298">
    <property type="protein sequence ID" value="CAJ82859.1"/>
    <property type="molecule type" value="mRNA"/>
</dbReference>
<dbReference type="EMBL" id="BC061625">
    <property type="protein sequence ID" value="AAH61625.1"/>
    <property type="molecule type" value="mRNA"/>
</dbReference>
<dbReference type="RefSeq" id="NP_988902.1">
    <property type="nucleotide sequence ID" value="NM_203571.1"/>
</dbReference>
<dbReference type="SMR" id="Q6P7K5"/>
<dbReference type="FunCoup" id="Q6P7K5">
    <property type="interactions" value="940"/>
</dbReference>
<dbReference type="STRING" id="8364.ENSXETP00000035798"/>
<dbReference type="PaxDb" id="8364-ENSXETP00000053654"/>
<dbReference type="DNASU" id="394497"/>
<dbReference type="GeneID" id="394497"/>
<dbReference type="KEGG" id="xtr:394497"/>
<dbReference type="AGR" id="Xenbase:XB-GENE-5788294"/>
<dbReference type="CTD" id="284361"/>
<dbReference type="Xenbase" id="XB-GENE-5788294">
    <property type="gene designation" value="emc10"/>
</dbReference>
<dbReference type="eggNOG" id="KOG4827">
    <property type="taxonomic scope" value="Eukaryota"/>
</dbReference>
<dbReference type="HOGENOM" id="CLU_065716_2_0_1"/>
<dbReference type="InParanoid" id="Q6P7K5"/>
<dbReference type="OMA" id="QFNDVLW"/>
<dbReference type="OrthoDB" id="1894652at2759"/>
<dbReference type="PhylomeDB" id="Q6P7K5"/>
<dbReference type="TreeFam" id="TF314052"/>
<dbReference type="Proteomes" id="UP000008143">
    <property type="component" value="Chromosome 7"/>
</dbReference>
<dbReference type="Bgee" id="ENSXETG00000024985">
    <property type="expression patterns" value="Expressed in testis and 16 other cell types or tissues"/>
</dbReference>
<dbReference type="ExpressionAtlas" id="Q6P7K5">
    <property type="expression patterns" value="differential"/>
</dbReference>
<dbReference type="GO" id="GO:0072546">
    <property type="term" value="C:EMC complex"/>
    <property type="evidence" value="ECO:0000250"/>
    <property type="project" value="UniProtKB"/>
</dbReference>
<dbReference type="GO" id="GO:0005789">
    <property type="term" value="C:endoplasmic reticulum membrane"/>
    <property type="evidence" value="ECO:0000250"/>
    <property type="project" value="UniProtKB"/>
</dbReference>
<dbReference type="GO" id="GO:0016020">
    <property type="term" value="C:membrane"/>
    <property type="evidence" value="ECO:0000250"/>
    <property type="project" value="UniProtKB"/>
</dbReference>
<dbReference type="GO" id="GO:0045050">
    <property type="term" value="P:protein insertion into ER membrane by stop-transfer membrane-anchor sequence"/>
    <property type="evidence" value="ECO:0000250"/>
    <property type="project" value="UniProtKB"/>
</dbReference>
<dbReference type="GO" id="GO:0071816">
    <property type="term" value="P:tail-anchored membrane protein insertion into ER membrane"/>
    <property type="evidence" value="ECO:0000250"/>
    <property type="project" value="UniProtKB"/>
</dbReference>
<dbReference type="CDD" id="cd22209">
    <property type="entry name" value="EMC10"/>
    <property type="match status" value="1"/>
</dbReference>
<dbReference type="PANTHER" id="PTHR21397">
    <property type="entry name" value="CHROMATIN COMPLEXES SUBUNIT BAP18-RELATED"/>
    <property type="match status" value="1"/>
</dbReference>
<dbReference type="PANTHER" id="PTHR21397:SF4">
    <property type="entry name" value="ER MEMBRANE PROTEIN COMPLEX SUBUNIT 10"/>
    <property type="match status" value="1"/>
</dbReference>
<dbReference type="Pfam" id="PF21203">
    <property type="entry name" value="ECM10"/>
    <property type="match status" value="1"/>
</dbReference>
<accession>Q6P7K5</accession>
<accession>Q28IN8</accession>
<sequence>MAAGCLVGQRAGPLSDKLSGYCWVLLPLLLVATAQASVCRLKTGDGRDSESCGTNLELEHSFELDDSIHFKKRGSLIWSGTAEQSISILQKQLTEDERNKLRDIANLNGLYRIRVPRKLGITEEANEYVTSFVRACSMVESHLSDQISVHTDISGNVVGISIVTFPGSCNGAEVEDVDLEMFNTTVYIQQPIAAAVPETAAFIERLEMEQAQKAKNPQEQKSFFAKYWMYIIPVVLFLMMSGASDAGNQGGNGGGGGGSGGGR</sequence>
<proteinExistence type="evidence at transcript level"/>
<gene>
    <name type="primary">emc10</name>
    <name type="ORF">TNeu053m17.1</name>
    <name type="ORF">TNeu118a02.1</name>
</gene>
<keyword id="KW-0256">Endoplasmic reticulum</keyword>
<keyword id="KW-0472">Membrane</keyword>
<keyword id="KW-1185">Reference proteome</keyword>
<keyword id="KW-0732">Signal</keyword>
<keyword id="KW-0812">Transmembrane</keyword>
<keyword id="KW-1133">Transmembrane helix</keyword>